<keyword id="KW-0066">ATP synthesis</keyword>
<keyword id="KW-0997">Cell inner membrane</keyword>
<keyword id="KW-1003">Cell membrane</keyword>
<keyword id="KW-0139">CF(1)</keyword>
<keyword id="KW-0375">Hydrogen ion transport</keyword>
<keyword id="KW-0406">Ion transport</keyword>
<keyword id="KW-0472">Membrane</keyword>
<keyword id="KW-1185">Reference proteome</keyword>
<keyword id="KW-0813">Transport</keyword>
<dbReference type="EMBL" id="CP000230">
    <property type="protein sequence ID" value="ABC22028.1"/>
    <property type="molecule type" value="Genomic_DNA"/>
</dbReference>
<dbReference type="RefSeq" id="WP_011388982.1">
    <property type="nucleotide sequence ID" value="NC_007643.1"/>
</dbReference>
<dbReference type="RefSeq" id="YP_426315.1">
    <property type="nucleotide sequence ID" value="NC_007643.1"/>
</dbReference>
<dbReference type="SMR" id="Q2RV17"/>
<dbReference type="STRING" id="269796.Rru_A1227"/>
<dbReference type="EnsemblBacteria" id="ABC22028">
    <property type="protein sequence ID" value="ABC22028"/>
    <property type="gene ID" value="Rru_A1227"/>
</dbReference>
<dbReference type="KEGG" id="rru:Rru_A1227"/>
<dbReference type="PATRIC" id="fig|269796.9.peg.1292"/>
<dbReference type="eggNOG" id="COG0355">
    <property type="taxonomic scope" value="Bacteria"/>
</dbReference>
<dbReference type="HOGENOM" id="CLU_084338_2_1_5"/>
<dbReference type="PhylomeDB" id="Q2RV17"/>
<dbReference type="Proteomes" id="UP000001929">
    <property type="component" value="Chromosome"/>
</dbReference>
<dbReference type="GO" id="GO:0005886">
    <property type="term" value="C:plasma membrane"/>
    <property type="evidence" value="ECO:0007669"/>
    <property type="project" value="UniProtKB-SubCell"/>
</dbReference>
<dbReference type="GO" id="GO:0045259">
    <property type="term" value="C:proton-transporting ATP synthase complex"/>
    <property type="evidence" value="ECO:0007669"/>
    <property type="project" value="UniProtKB-KW"/>
</dbReference>
<dbReference type="GO" id="GO:0005524">
    <property type="term" value="F:ATP binding"/>
    <property type="evidence" value="ECO:0007669"/>
    <property type="project" value="UniProtKB-UniRule"/>
</dbReference>
<dbReference type="GO" id="GO:0046933">
    <property type="term" value="F:proton-transporting ATP synthase activity, rotational mechanism"/>
    <property type="evidence" value="ECO:0007669"/>
    <property type="project" value="UniProtKB-UniRule"/>
</dbReference>
<dbReference type="CDD" id="cd12152">
    <property type="entry name" value="F1-ATPase_delta"/>
    <property type="match status" value="1"/>
</dbReference>
<dbReference type="Gene3D" id="2.60.15.10">
    <property type="entry name" value="F0F1 ATP synthase delta/epsilon subunit, N-terminal"/>
    <property type="match status" value="1"/>
</dbReference>
<dbReference type="HAMAP" id="MF_00530">
    <property type="entry name" value="ATP_synth_epsil_bac"/>
    <property type="match status" value="1"/>
</dbReference>
<dbReference type="InterPro" id="IPR001469">
    <property type="entry name" value="ATP_synth_F1_dsu/esu"/>
</dbReference>
<dbReference type="InterPro" id="IPR020546">
    <property type="entry name" value="ATP_synth_F1_dsu/esu_N"/>
</dbReference>
<dbReference type="InterPro" id="IPR036771">
    <property type="entry name" value="ATPsynth_dsu/esu_N"/>
</dbReference>
<dbReference type="NCBIfam" id="TIGR01216">
    <property type="entry name" value="ATP_synt_epsi"/>
    <property type="match status" value="1"/>
</dbReference>
<dbReference type="NCBIfam" id="NF001851">
    <property type="entry name" value="PRK00571.2-4"/>
    <property type="match status" value="1"/>
</dbReference>
<dbReference type="PANTHER" id="PTHR13822">
    <property type="entry name" value="ATP SYNTHASE DELTA/EPSILON CHAIN"/>
    <property type="match status" value="1"/>
</dbReference>
<dbReference type="PANTHER" id="PTHR13822:SF10">
    <property type="entry name" value="ATP SYNTHASE EPSILON CHAIN, CHLOROPLASTIC"/>
    <property type="match status" value="1"/>
</dbReference>
<dbReference type="Pfam" id="PF02823">
    <property type="entry name" value="ATP-synt_DE_N"/>
    <property type="match status" value="1"/>
</dbReference>
<dbReference type="SUPFAM" id="SSF51344">
    <property type="entry name" value="Epsilon subunit of F1F0-ATP synthase N-terminal domain"/>
    <property type="match status" value="1"/>
</dbReference>
<protein>
    <recommendedName>
        <fullName evidence="1">ATP synthase epsilon chain</fullName>
    </recommendedName>
    <alternativeName>
        <fullName evidence="1">ATP synthase F1 sector epsilon subunit</fullName>
    </alternativeName>
    <alternativeName>
        <fullName evidence="1">F-ATPase epsilon subunit</fullName>
    </alternativeName>
</protein>
<sequence>MAETTEFELVSPERLLFSEPVEMVVVPGTDGDFGAMPRHAPLLSTVRPGVISTYNGGKVQRRIFVAGGFAEVTEDRCTVLADEAFDLASLSEEAVRARLQAADDRLKEATSEAEKAEAAQAKAIAEALLAARKG</sequence>
<organism>
    <name type="scientific">Rhodospirillum rubrum (strain ATCC 11170 / ATH 1.1.1 / DSM 467 / LMG 4362 / NCIMB 8255 / S1)</name>
    <dbReference type="NCBI Taxonomy" id="269796"/>
    <lineage>
        <taxon>Bacteria</taxon>
        <taxon>Pseudomonadati</taxon>
        <taxon>Pseudomonadota</taxon>
        <taxon>Alphaproteobacteria</taxon>
        <taxon>Rhodospirillales</taxon>
        <taxon>Rhodospirillaceae</taxon>
        <taxon>Rhodospirillum</taxon>
    </lineage>
</organism>
<name>ATPE_RHORT</name>
<reference key="1">
    <citation type="journal article" date="2011" name="Stand. Genomic Sci.">
        <title>Complete genome sequence of Rhodospirillum rubrum type strain (S1).</title>
        <authorList>
            <person name="Munk A.C."/>
            <person name="Copeland A."/>
            <person name="Lucas S."/>
            <person name="Lapidus A."/>
            <person name="Del Rio T.G."/>
            <person name="Barry K."/>
            <person name="Detter J.C."/>
            <person name="Hammon N."/>
            <person name="Israni S."/>
            <person name="Pitluck S."/>
            <person name="Brettin T."/>
            <person name="Bruce D."/>
            <person name="Han C."/>
            <person name="Tapia R."/>
            <person name="Gilna P."/>
            <person name="Schmutz J."/>
            <person name="Larimer F."/>
            <person name="Land M."/>
            <person name="Kyrpides N.C."/>
            <person name="Mavromatis K."/>
            <person name="Richardson P."/>
            <person name="Rohde M."/>
            <person name="Goeker M."/>
            <person name="Klenk H.P."/>
            <person name="Zhang Y."/>
            <person name="Roberts G.P."/>
            <person name="Reslewic S."/>
            <person name="Schwartz D.C."/>
        </authorList>
    </citation>
    <scope>NUCLEOTIDE SEQUENCE [LARGE SCALE GENOMIC DNA]</scope>
    <source>
        <strain>ATCC 11170 / ATH 1.1.1 / DSM 467 / LMG 4362 / NCIMB 8255 / S1</strain>
    </source>
</reference>
<gene>
    <name evidence="1" type="primary">atpC</name>
    <name type="ordered locus">Rru_A1227</name>
</gene>
<proteinExistence type="inferred from homology"/>
<feature type="chain" id="PRO_0000265879" description="ATP synthase epsilon chain">
    <location>
        <begin position="1"/>
        <end position="134"/>
    </location>
</feature>
<evidence type="ECO:0000255" key="1">
    <source>
        <dbReference type="HAMAP-Rule" id="MF_00530"/>
    </source>
</evidence>
<comment type="function">
    <text evidence="1">Produces ATP from ADP in the presence of a proton gradient across the membrane.</text>
</comment>
<comment type="subunit">
    <text>F-type ATPases have 2 components, CF(1) - the catalytic core - and CF(0) - the membrane proton channel. CF(1) has five subunits: alpha(3), beta(3), gamma(1), delta(1), epsilon(1). CF(0) has three main subunits: a, b and c.</text>
</comment>
<comment type="subcellular location">
    <subcellularLocation>
        <location evidence="1">Cell inner membrane</location>
        <topology evidence="1">Peripheral membrane protein</topology>
    </subcellularLocation>
</comment>
<comment type="similarity">
    <text evidence="1">Belongs to the ATPase epsilon chain family.</text>
</comment>
<accession>Q2RV17</accession>